<reference key="1">
    <citation type="journal article" date="2009" name="J. Bacteriol.">
        <title>Complete genome sequence and comparative genome analysis of enteropathogenic Escherichia coli O127:H6 strain E2348/69.</title>
        <authorList>
            <person name="Iguchi A."/>
            <person name="Thomson N.R."/>
            <person name="Ogura Y."/>
            <person name="Saunders D."/>
            <person name="Ooka T."/>
            <person name="Henderson I.R."/>
            <person name="Harris D."/>
            <person name="Asadulghani M."/>
            <person name="Kurokawa K."/>
            <person name="Dean P."/>
            <person name="Kenny B."/>
            <person name="Quail M.A."/>
            <person name="Thurston S."/>
            <person name="Dougan G."/>
            <person name="Hayashi T."/>
            <person name="Parkhill J."/>
            <person name="Frankel G."/>
        </authorList>
    </citation>
    <scope>NUCLEOTIDE SEQUENCE [LARGE SCALE GENOMIC DNA]</scope>
    <source>
        <strain>E2348/69 / EPEC</strain>
    </source>
</reference>
<keyword id="KW-0997">Cell inner membrane</keyword>
<keyword id="KW-1003">Cell membrane</keyword>
<keyword id="KW-0472">Membrane</keyword>
<keyword id="KW-1185">Reference proteome</keyword>
<keyword id="KW-0812">Transmembrane</keyword>
<keyword id="KW-1133">Transmembrane helix</keyword>
<keyword id="KW-0813">Transport</keyword>
<comment type="function">
    <text evidence="1">Forms an efflux pump with AaeB.</text>
</comment>
<comment type="subcellular location">
    <subcellularLocation>
        <location evidence="1">Cell inner membrane</location>
        <topology evidence="1">Single-pass membrane protein</topology>
    </subcellularLocation>
</comment>
<comment type="induction">
    <text evidence="1">Positively coregulated with aaeB and aaeX by AaeR.</text>
</comment>
<comment type="similarity">
    <text evidence="1">Belongs to the membrane fusion protein (MFP) (TC 8.A.1) family.</text>
</comment>
<sequence>MKTLIRKFSRTAITVVLVILAFIAIFNAWVYYTESPWTRDARFSADVVAIAPDVSGLITQVNVHDNQLVKKGQVLFTIDQPRYQKALEEAQADVAYYQVLAQEKRQEAGRRNRLGVQAMSREEIDQANNVLQTVLHQLAKAQATRDLAKLDLERTVIRAPADGWVTNLNVYTGEFITRGSTAVALVKQNSFYVLAYMEETKLEGVRPGYRAEITPLGSNKVLKGTVDSVAAGVTNASSTRDDKGMATIDSNLEWVRLAQRVPVRIRLDNQQENIWPAGTTATVVVTGKQDRDESQDSFFRKMAHRLREFG</sequence>
<dbReference type="EMBL" id="FM180568">
    <property type="protein sequence ID" value="CAS11060.1"/>
    <property type="molecule type" value="Genomic_DNA"/>
</dbReference>
<dbReference type="RefSeq" id="WP_000854033.1">
    <property type="nucleotide sequence ID" value="NC_011601.1"/>
</dbReference>
<dbReference type="SMR" id="B7UJX3"/>
<dbReference type="KEGG" id="ecg:E2348C_3512"/>
<dbReference type="HOGENOM" id="CLU_018816_15_2_6"/>
<dbReference type="Proteomes" id="UP000008205">
    <property type="component" value="Chromosome"/>
</dbReference>
<dbReference type="GO" id="GO:0005886">
    <property type="term" value="C:plasma membrane"/>
    <property type="evidence" value="ECO:0007669"/>
    <property type="project" value="UniProtKB-SubCell"/>
</dbReference>
<dbReference type="GO" id="GO:0022857">
    <property type="term" value="F:transmembrane transporter activity"/>
    <property type="evidence" value="ECO:0007669"/>
    <property type="project" value="UniProtKB-UniRule"/>
</dbReference>
<dbReference type="FunFam" id="2.40.30.170:FF:000002">
    <property type="entry name" value="p-hydroxybenzoic acid efflux pump subunit AaeA"/>
    <property type="match status" value="1"/>
</dbReference>
<dbReference type="FunFam" id="2.40.50.100:FF:000018">
    <property type="entry name" value="p-hydroxybenzoic acid efflux pump subunit AaeA"/>
    <property type="match status" value="1"/>
</dbReference>
<dbReference type="Gene3D" id="2.40.30.170">
    <property type="match status" value="1"/>
</dbReference>
<dbReference type="Gene3D" id="2.40.50.100">
    <property type="match status" value="1"/>
</dbReference>
<dbReference type="HAMAP" id="MF_01544">
    <property type="entry name" value="AaeA"/>
    <property type="match status" value="1"/>
</dbReference>
<dbReference type="InterPro" id="IPR043602">
    <property type="entry name" value="CusB-like_dom_1"/>
</dbReference>
<dbReference type="InterPro" id="IPR032317">
    <property type="entry name" value="CusB_D23"/>
</dbReference>
<dbReference type="InterPro" id="IPR050393">
    <property type="entry name" value="MFP_Efflux_Pump"/>
</dbReference>
<dbReference type="InterPro" id="IPR022871">
    <property type="entry name" value="PHBA_efflux_pump_AaeA"/>
</dbReference>
<dbReference type="InterPro" id="IPR006143">
    <property type="entry name" value="RND_pump_MFP"/>
</dbReference>
<dbReference type="NCBIfam" id="NF007850">
    <property type="entry name" value="PRK10559.1"/>
    <property type="match status" value="1"/>
</dbReference>
<dbReference type="NCBIfam" id="TIGR01730">
    <property type="entry name" value="RND_mfp"/>
    <property type="match status" value="1"/>
</dbReference>
<dbReference type="PANTHER" id="PTHR30367:SF12">
    <property type="entry name" value="P-HYDROXYBENZOIC ACID EFFLUX PUMP SUBUNIT AAEA"/>
    <property type="match status" value="1"/>
</dbReference>
<dbReference type="PANTHER" id="PTHR30367">
    <property type="entry name" value="P-HYDROXYBENZOIC ACID EFFLUX PUMP SUBUNIT AAEA-RELATED"/>
    <property type="match status" value="1"/>
</dbReference>
<dbReference type="Pfam" id="PF00529">
    <property type="entry name" value="CusB_dom_1"/>
    <property type="match status" value="1"/>
</dbReference>
<dbReference type="Pfam" id="PF16576">
    <property type="entry name" value="HlyD_D23"/>
    <property type="match status" value="1"/>
</dbReference>
<dbReference type="SUPFAM" id="SSF111369">
    <property type="entry name" value="HlyD-like secretion proteins"/>
    <property type="match status" value="1"/>
</dbReference>
<proteinExistence type="inferred from homology"/>
<feature type="chain" id="PRO_1000185272" description="p-hydroxybenzoic acid efflux pump subunit AaeA">
    <location>
        <begin position="1"/>
        <end position="310"/>
    </location>
</feature>
<feature type="transmembrane region" description="Helical" evidence="1">
    <location>
        <begin position="12"/>
        <end position="32"/>
    </location>
</feature>
<name>AAEA_ECO27</name>
<evidence type="ECO:0000255" key="1">
    <source>
        <dbReference type="HAMAP-Rule" id="MF_01544"/>
    </source>
</evidence>
<accession>B7UJX3</accession>
<organism>
    <name type="scientific">Escherichia coli O127:H6 (strain E2348/69 / EPEC)</name>
    <dbReference type="NCBI Taxonomy" id="574521"/>
    <lineage>
        <taxon>Bacteria</taxon>
        <taxon>Pseudomonadati</taxon>
        <taxon>Pseudomonadota</taxon>
        <taxon>Gammaproteobacteria</taxon>
        <taxon>Enterobacterales</taxon>
        <taxon>Enterobacteriaceae</taxon>
        <taxon>Escherichia</taxon>
    </lineage>
</organism>
<gene>
    <name evidence="1" type="primary">aaeA</name>
    <name type="ordered locus">E2348C_3512</name>
</gene>
<protein>
    <recommendedName>
        <fullName evidence="1">p-hydroxybenzoic acid efflux pump subunit AaeA</fullName>
        <shortName evidence="1">pHBA efflux pump protein A</shortName>
    </recommendedName>
</protein>